<gene>
    <name type="primary">mutM1</name>
    <name type="synonym">fpg1</name>
    <name type="ordered locus">PD_0053</name>
</gene>
<gene>
    <name type="primary">mutM2</name>
    <name type="synonym">fpg2</name>
    <name type="ordered locus">PD_0138</name>
</gene>
<keyword id="KW-0227">DNA damage</keyword>
<keyword id="KW-0234">DNA repair</keyword>
<keyword id="KW-0238">DNA-binding</keyword>
<keyword id="KW-0326">Glycosidase</keyword>
<keyword id="KW-0378">Hydrolase</keyword>
<keyword id="KW-0456">Lyase</keyword>
<keyword id="KW-0479">Metal-binding</keyword>
<keyword id="KW-0511">Multifunctional enzyme</keyword>
<keyword id="KW-1185">Reference proteome</keyword>
<keyword id="KW-0862">Zinc</keyword>
<keyword id="KW-0863">Zinc-finger</keyword>
<protein>
    <recommendedName>
        <fullName>Formamidopyrimidine-DNA glycosylase</fullName>
        <shortName>Fapy-DNA glycosylase</shortName>
        <ecNumber>3.2.2.23</ecNumber>
    </recommendedName>
    <alternativeName>
        <fullName>DNA-(apurinic or apyrimidinic site) lyase MutM</fullName>
        <shortName>AP lyase MutM</shortName>
        <ecNumber>4.2.99.18</ecNumber>
    </alternativeName>
</protein>
<proteinExistence type="inferred from homology"/>
<sequence length="271" mass="31091">MPELPEVETTLRGLLPYLTNQLIYSLTLRRRTLRWDIPSHIESRLPGHRITTVCRRAKYLLIDTNAGGSLIIHLGMSGTLRLLAPETPLRPHDHVDIMLNNRRVLRFNDPRRFGCLLWQEDGQIHPLLQRLGCEPLSDSFNGDYLYQCSRARNVSVKTFLMDQRIVVGVGNIYAAESLFRAGISPLCEADKISLQRYRRLAEVVKDILLYAINRGGTTLRDFLSPDGRPGYFKQELFVYGRQQQPCKQCGSLLRQTTIRQRTTVWCGHCQG</sequence>
<accession>P64155</accession>
<accession>Q9P9S8</accession>
<reference key="1">
    <citation type="journal article" date="2003" name="J. Bacteriol.">
        <title>Comparative analyses of the complete genome sequences of Pierce's disease and citrus variegated chlorosis strains of Xylella fastidiosa.</title>
        <authorList>
            <person name="Van Sluys M.A."/>
            <person name="de Oliveira M.C."/>
            <person name="Monteiro-Vitorello C.B."/>
            <person name="Miyaki C.Y."/>
            <person name="Furlan L.R."/>
            <person name="Camargo L.E.A."/>
            <person name="da Silva A.C.R."/>
            <person name="Moon D.H."/>
            <person name="Takita M.A."/>
            <person name="Lemos E.G.M."/>
            <person name="Machado M.A."/>
            <person name="Ferro M.I.T."/>
            <person name="da Silva F.R."/>
            <person name="Goldman M.H.S."/>
            <person name="Goldman G.H."/>
            <person name="Lemos M.V.F."/>
            <person name="El-Dorry H."/>
            <person name="Tsai S.M."/>
            <person name="Carrer H."/>
            <person name="Carraro D.M."/>
            <person name="de Oliveira R.C."/>
            <person name="Nunes L.R."/>
            <person name="Siqueira W.J."/>
            <person name="Coutinho L.L."/>
            <person name="Kimura E.T."/>
            <person name="Ferro E.S."/>
            <person name="Harakava R."/>
            <person name="Kuramae E.E."/>
            <person name="Marino C.L."/>
            <person name="Giglioti E."/>
            <person name="Abreu I.L."/>
            <person name="Alves L.M.C."/>
            <person name="do Amaral A.M."/>
            <person name="Baia G.S."/>
            <person name="Blanco S.R."/>
            <person name="Brito M.S."/>
            <person name="Cannavan F.S."/>
            <person name="Celestino A.V."/>
            <person name="da Cunha A.F."/>
            <person name="Fenille R.C."/>
            <person name="Ferro J.A."/>
            <person name="Formighieri E.F."/>
            <person name="Kishi L.T."/>
            <person name="Leoni S.G."/>
            <person name="Oliveira A.R."/>
            <person name="Rosa V.E. Jr."/>
            <person name="Sassaki F.T."/>
            <person name="Sena J.A.D."/>
            <person name="de Souza A.A."/>
            <person name="Truffi D."/>
            <person name="Tsukumo F."/>
            <person name="Yanai G.M."/>
            <person name="Zaros L.G."/>
            <person name="Civerolo E.L."/>
            <person name="Simpson A.J.G."/>
            <person name="Almeida N.F. Jr."/>
            <person name="Setubal J.C."/>
            <person name="Kitajima J.P."/>
        </authorList>
    </citation>
    <scope>NUCLEOTIDE SEQUENCE [LARGE SCALE GENOMIC DNA]</scope>
    <source>
        <strain>Temecula1 / ATCC 700964</strain>
    </source>
</reference>
<comment type="function">
    <text evidence="1">Involved in base excision repair of DNA damaged by oxidation or by mutagenic agents. Acts as a DNA glycosylase that recognizes and removes damaged bases. Has a preference for oxidized purines, such as 7,8-dihydro-8-oxoguanine (8-oxoG). Has AP (apurinic/apyrimidinic) lyase activity and introduces nicks in the DNA strand. Cleaves the DNA backbone by beta-delta elimination to generate a single-strand break at the site of the removed base with both 3'- and 5'-phosphates (By similarity).</text>
</comment>
<comment type="catalytic activity">
    <reaction>
        <text>Hydrolysis of DNA containing ring-opened 7-methylguanine residues, releasing 2,6-diamino-4-hydroxy-5-(N-methyl)formamidopyrimidine.</text>
        <dbReference type="EC" id="3.2.2.23"/>
    </reaction>
</comment>
<comment type="catalytic activity">
    <reaction>
        <text>2'-deoxyribonucleotide-(2'-deoxyribose 5'-phosphate)-2'-deoxyribonucleotide-DNA = a 3'-end 2'-deoxyribonucleotide-(2,3-dehydro-2,3-deoxyribose 5'-phosphate)-DNA + a 5'-end 5'-phospho-2'-deoxyribonucleoside-DNA + H(+)</text>
        <dbReference type="Rhea" id="RHEA:66592"/>
        <dbReference type="Rhea" id="RHEA-COMP:13180"/>
        <dbReference type="Rhea" id="RHEA-COMP:16897"/>
        <dbReference type="Rhea" id="RHEA-COMP:17067"/>
        <dbReference type="ChEBI" id="CHEBI:15378"/>
        <dbReference type="ChEBI" id="CHEBI:136412"/>
        <dbReference type="ChEBI" id="CHEBI:157695"/>
        <dbReference type="ChEBI" id="CHEBI:167181"/>
        <dbReference type="EC" id="4.2.99.18"/>
    </reaction>
</comment>
<comment type="cofactor">
    <cofactor evidence="1">
        <name>Zn(2+)</name>
        <dbReference type="ChEBI" id="CHEBI:29105"/>
    </cofactor>
    <text evidence="1">Binds 1 zinc ion per subunit.</text>
</comment>
<comment type="subunit">
    <text evidence="1">Monomer.</text>
</comment>
<comment type="similarity">
    <text evidence="2">Belongs to the FPG family.</text>
</comment>
<organism>
    <name type="scientific">Xylella fastidiosa (strain Temecula1 / ATCC 700964)</name>
    <dbReference type="NCBI Taxonomy" id="183190"/>
    <lineage>
        <taxon>Bacteria</taxon>
        <taxon>Pseudomonadati</taxon>
        <taxon>Pseudomonadota</taxon>
        <taxon>Gammaproteobacteria</taxon>
        <taxon>Lysobacterales</taxon>
        <taxon>Lysobacteraceae</taxon>
        <taxon>Xylella</taxon>
    </lineage>
</organism>
<name>FPG_XYLFT</name>
<evidence type="ECO:0000250" key="1"/>
<evidence type="ECO:0000305" key="2"/>
<dbReference type="EC" id="3.2.2.23"/>
<dbReference type="EC" id="4.2.99.18"/>
<dbReference type="EMBL" id="AE009442">
    <property type="protein sequence ID" value="AAO27954.1"/>
    <property type="molecule type" value="Genomic_DNA"/>
</dbReference>
<dbReference type="EMBL" id="AE009442">
    <property type="protein sequence ID" value="AAO28032.1"/>
    <property type="molecule type" value="Genomic_DNA"/>
</dbReference>
<dbReference type="SMR" id="P64155"/>
<dbReference type="KEGG" id="xft:PD_0053"/>
<dbReference type="KEGG" id="xft:PD_0138"/>
<dbReference type="HOGENOM" id="CLU_038423_1_1_6"/>
<dbReference type="Proteomes" id="UP000002516">
    <property type="component" value="Chromosome"/>
</dbReference>
<dbReference type="GO" id="GO:0034039">
    <property type="term" value="F:8-oxo-7,8-dihydroguanine DNA N-glycosylase activity"/>
    <property type="evidence" value="ECO:0007669"/>
    <property type="project" value="TreeGrafter"/>
</dbReference>
<dbReference type="GO" id="GO:0140078">
    <property type="term" value="F:class I DNA-(apurinic or apyrimidinic site) endonuclease activity"/>
    <property type="evidence" value="ECO:0007669"/>
    <property type="project" value="UniProtKB-EC"/>
</dbReference>
<dbReference type="GO" id="GO:0003684">
    <property type="term" value="F:damaged DNA binding"/>
    <property type="evidence" value="ECO:0007669"/>
    <property type="project" value="InterPro"/>
</dbReference>
<dbReference type="GO" id="GO:0008270">
    <property type="term" value="F:zinc ion binding"/>
    <property type="evidence" value="ECO:0007669"/>
    <property type="project" value="UniProtKB-UniRule"/>
</dbReference>
<dbReference type="GO" id="GO:0006284">
    <property type="term" value="P:base-excision repair"/>
    <property type="evidence" value="ECO:0007669"/>
    <property type="project" value="InterPro"/>
</dbReference>
<dbReference type="CDD" id="cd08966">
    <property type="entry name" value="EcFpg-like_N"/>
    <property type="match status" value="1"/>
</dbReference>
<dbReference type="FunFam" id="1.10.8.50:FF:000003">
    <property type="entry name" value="Formamidopyrimidine-DNA glycosylase"/>
    <property type="match status" value="1"/>
</dbReference>
<dbReference type="FunFam" id="3.20.190.10:FF:000001">
    <property type="entry name" value="Formamidopyrimidine-DNA glycosylase"/>
    <property type="match status" value="1"/>
</dbReference>
<dbReference type="Gene3D" id="1.10.8.50">
    <property type="match status" value="1"/>
</dbReference>
<dbReference type="Gene3D" id="3.20.190.10">
    <property type="entry name" value="MutM-like, N-terminal"/>
    <property type="match status" value="1"/>
</dbReference>
<dbReference type="HAMAP" id="MF_00103">
    <property type="entry name" value="Fapy_DNA_glycosyl"/>
    <property type="match status" value="1"/>
</dbReference>
<dbReference type="InterPro" id="IPR015886">
    <property type="entry name" value="DNA_glyclase/AP_lyase_DNA-bd"/>
</dbReference>
<dbReference type="InterPro" id="IPR015887">
    <property type="entry name" value="DNA_glyclase_Znf_dom_DNA_BS"/>
</dbReference>
<dbReference type="InterPro" id="IPR020629">
    <property type="entry name" value="Formamido-pyr_DNA_Glyclase"/>
</dbReference>
<dbReference type="InterPro" id="IPR012319">
    <property type="entry name" value="FPG_cat"/>
</dbReference>
<dbReference type="InterPro" id="IPR035937">
    <property type="entry name" value="MutM-like_N-ter"/>
</dbReference>
<dbReference type="InterPro" id="IPR010979">
    <property type="entry name" value="Ribosomal_uS13-like_H2TH"/>
</dbReference>
<dbReference type="InterPro" id="IPR000214">
    <property type="entry name" value="Znf_DNA_glyclase/AP_lyase"/>
</dbReference>
<dbReference type="NCBIfam" id="TIGR00577">
    <property type="entry name" value="fpg"/>
    <property type="match status" value="1"/>
</dbReference>
<dbReference type="NCBIfam" id="NF002211">
    <property type="entry name" value="PRK01103.1"/>
    <property type="match status" value="1"/>
</dbReference>
<dbReference type="PANTHER" id="PTHR22993">
    <property type="entry name" value="FORMAMIDOPYRIMIDINE-DNA GLYCOSYLASE"/>
    <property type="match status" value="1"/>
</dbReference>
<dbReference type="PANTHER" id="PTHR22993:SF9">
    <property type="entry name" value="FORMAMIDOPYRIMIDINE-DNA GLYCOSYLASE"/>
    <property type="match status" value="1"/>
</dbReference>
<dbReference type="Pfam" id="PF01149">
    <property type="entry name" value="Fapy_DNA_glyco"/>
    <property type="match status" value="1"/>
</dbReference>
<dbReference type="Pfam" id="PF06831">
    <property type="entry name" value="H2TH"/>
    <property type="match status" value="1"/>
</dbReference>
<dbReference type="SMART" id="SM00898">
    <property type="entry name" value="Fapy_DNA_glyco"/>
    <property type="match status" value="1"/>
</dbReference>
<dbReference type="SMART" id="SM01232">
    <property type="entry name" value="H2TH"/>
    <property type="match status" value="1"/>
</dbReference>
<dbReference type="SUPFAM" id="SSF57716">
    <property type="entry name" value="Glucocorticoid receptor-like (DNA-binding domain)"/>
    <property type="match status" value="1"/>
</dbReference>
<dbReference type="SUPFAM" id="SSF81624">
    <property type="entry name" value="N-terminal domain of MutM-like DNA repair proteins"/>
    <property type="match status" value="1"/>
</dbReference>
<dbReference type="SUPFAM" id="SSF46946">
    <property type="entry name" value="S13-like H2TH domain"/>
    <property type="match status" value="1"/>
</dbReference>
<dbReference type="PROSITE" id="PS51068">
    <property type="entry name" value="FPG_CAT"/>
    <property type="match status" value="1"/>
</dbReference>
<dbReference type="PROSITE" id="PS01242">
    <property type="entry name" value="ZF_FPG_1"/>
    <property type="match status" value="1"/>
</dbReference>
<dbReference type="PROSITE" id="PS51066">
    <property type="entry name" value="ZF_FPG_2"/>
    <property type="match status" value="1"/>
</dbReference>
<feature type="initiator methionine" description="Removed" evidence="1">
    <location>
        <position position="1"/>
    </location>
</feature>
<feature type="chain" id="PRO_0000170889" description="Formamidopyrimidine-DNA glycosylase">
    <location>
        <begin position="2"/>
        <end position="271"/>
    </location>
</feature>
<feature type="zinc finger region" description="FPG-type">
    <location>
        <begin position="237"/>
        <end position="271"/>
    </location>
</feature>
<feature type="active site" description="Schiff-base intermediate with DNA" evidence="1">
    <location>
        <position position="2"/>
    </location>
</feature>
<feature type="active site" description="Proton donor" evidence="1">
    <location>
        <position position="3"/>
    </location>
</feature>
<feature type="active site" description="Proton donor; for beta-elimination activity" evidence="1">
    <location>
        <position position="58"/>
    </location>
</feature>
<feature type="active site" description="Proton donor; for delta-elimination activity" evidence="1">
    <location>
        <position position="261"/>
    </location>
</feature>
<feature type="binding site" evidence="1">
    <location>
        <position position="92"/>
    </location>
    <ligand>
        <name>DNA</name>
        <dbReference type="ChEBI" id="CHEBI:16991"/>
    </ligand>
</feature>
<feature type="binding site" evidence="1">
    <location>
        <position position="111"/>
    </location>
    <ligand>
        <name>DNA</name>
        <dbReference type="ChEBI" id="CHEBI:16991"/>
    </ligand>
</feature>
<feature type="binding site" evidence="1">
    <location>
        <position position="152"/>
    </location>
    <ligand>
        <name>DNA</name>
        <dbReference type="ChEBI" id="CHEBI:16991"/>
    </ligand>
</feature>